<dbReference type="EC" id="1.7.-.-" evidence="2"/>
<dbReference type="EC" id="1.11.1.-" evidence="2"/>
<dbReference type="EMBL" id="AF291833">
    <property type="protein sequence ID" value="AAG02107.1"/>
    <property type="molecule type" value="mRNA"/>
</dbReference>
<dbReference type="SMR" id="Q9DGJ1"/>
<dbReference type="GO" id="GO:0070062">
    <property type="term" value="C:extracellular exosome"/>
    <property type="evidence" value="ECO:0007669"/>
    <property type="project" value="TreeGrafter"/>
</dbReference>
<dbReference type="GO" id="GO:0016528">
    <property type="term" value="C:sarcoplasm"/>
    <property type="evidence" value="ECO:0000250"/>
    <property type="project" value="UniProtKB"/>
</dbReference>
<dbReference type="GO" id="GO:0020037">
    <property type="term" value="F:heme binding"/>
    <property type="evidence" value="ECO:0007669"/>
    <property type="project" value="InterPro"/>
</dbReference>
<dbReference type="GO" id="GO:0046872">
    <property type="term" value="F:metal ion binding"/>
    <property type="evidence" value="ECO:0007669"/>
    <property type="project" value="UniProtKB-KW"/>
</dbReference>
<dbReference type="GO" id="GO:0098809">
    <property type="term" value="F:nitrite reductase activity"/>
    <property type="evidence" value="ECO:0000250"/>
    <property type="project" value="UniProtKB"/>
</dbReference>
<dbReference type="GO" id="GO:0019825">
    <property type="term" value="F:oxygen binding"/>
    <property type="evidence" value="ECO:0007669"/>
    <property type="project" value="InterPro"/>
</dbReference>
<dbReference type="GO" id="GO:0005344">
    <property type="term" value="F:oxygen carrier activity"/>
    <property type="evidence" value="ECO:0000250"/>
    <property type="project" value="UniProtKB"/>
</dbReference>
<dbReference type="GO" id="GO:0004601">
    <property type="term" value="F:peroxidase activity"/>
    <property type="evidence" value="ECO:0000250"/>
    <property type="project" value="UniProtKB"/>
</dbReference>
<dbReference type="GO" id="GO:0019430">
    <property type="term" value="P:removal of superoxide radicals"/>
    <property type="evidence" value="ECO:0000250"/>
    <property type="project" value="UniProtKB"/>
</dbReference>
<dbReference type="Gene3D" id="6.10.140.2100">
    <property type="match status" value="1"/>
</dbReference>
<dbReference type="Gene3D" id="6.10.140.2110">
    <property type="match status" value="1"/>
</dbReference>
<dbReference type="InterPro" id="IPR000971">
    <property type="entry name" value="Globin"/>
</dbReference>
<dbReference type="InterPro" id="IPR009050">
    <property type="entry name" value="Globin-like_sf"/>
</dbReference>
<dbReference type="InterPro" id="IPR002335">
    <property type="entry name" value="Myoglobin"/>
</dbReference>
<dbReference type="PANTHER" id="PTHR47132">
    <property type="entry name" value="MYOGLOBIN"/>
    <property type="match status" value="1"/>
</dbReference>
<dbReference type="PANTHER" id="PTHR47132:SF1">
    <property type="entry name" value="MYOGLOBIN"/>
    <property type="match status" value="1"/>
</dbReference>
<dbReference type="Pfam" id="PF00042">
    <property type="entry name" value="Globin"/>
    <property type="match status" value="1"/>
</dbReference>
<dbReference type="PRINTS" id="PR00613">
    <property type="entry name" value="MYOGLOBIN"/>
</dbReference>
<dbReference type="SUPFAM" id="SSF46458">
    <property type="entry name" value="Globin-like"/>
    <property type="match status" value="1"/>
</dbReference>
<dbReference type="PROSITE" id="PS01033">
    <property type="entry name" value="GLOBIN"/>
    <property type="match status" value="1"/>
</dbReference>
<feature type="initiator methionine" description="Removed" evidence="1">
    <location>
        <position position="1"/>
    </location>
</feature>
<feature type="chain" id="PRO_0000053367" description="Myoglobin">
    <location>
        <begin position="2"/>
        <end position="147"/>
    </location>
</feature>
<feature type="domain" description="Globin" evidence="6">
    <location>
        <begin position="2"/>
        <end position="137"/>
    </location>
</feature>
<feature type="binding site" evidence="5">
    <location>
        <position position="60"/>
    </location>
    <ligand>
        <name>nitrite</name>
        <dbReference type="ChEBI" id="CHEBI:16301"/>
    </ligand>
</feature>
<feature type="binding site" evidence="4 6">
    <location>
        <position position="60"/>
    </location>
    <ligand>
        <name>O2</name>
        <dbReference type="ChEBI" id="CHEBI:15379"/>
    </ligand>
</feature>
<feature type="binding site" description="proximal binding residue" evidence="2">
    <location>
        <position position="89"/>
    </location>
    <ligand>
        <name>heme b</name>
        <dbReference type="ChEBI" id="CHEBI:60344"/>
    </ligand>
    <ligandPart>
        <name>Fe</name>
        <dbReference type="ChEBI" id="CHEBI:18248"/>
    </ligandPart>
</feature>
<reference key="1">
    <citation type="journal article" date="2001" name="Am. J. Physiol.">
        <title>Oxygen affinity and amino acid sequence of myoglobins from endothermic and ectothermic fish.</title>
        <authorList>
            <person name="Marcinek D.J."/>
            <person name="Bonaventura J."/>
            <person name="Wittenberg J.B."/>
            <person name="Block B.A."/>
        </authorList>
    </citation>
    <scope>NUCLEOTIDE SEQUENCE [MRNA]</scope>
    <source>
        <tissue>Skeletal muscle</tissue>
    </source>
</reference>
<comment type="function">
    <text evidence="2">Monomeric heme protein which primary function is to store oxygen and facilitate its diffusion within muscle tissues. Reversibly binds oxygen through a pentacoordinated heme iron and enables its timely and efficient release as needed during periods of heightened demand. Depending on the oxidative conditions of tissues and cells, and in addition to its ability to bind oxygen, it also has a nitrite reductase activity whereby it regulates the production of bioactive nitric oxide. Under stress conditions, like hypoxia and anoxia, it also protects cells against reactive oxygen species thanks to its pseudoperoxidase activity.</text>
</comment>
<comment type="catalytic activity">
    <reaction evidence="2">
        <text>Fe(III)-heme b-[protein] + nitric oxide + H2O = Fe(II)-heme b-[protein] + nitrite + 2 H(+)</text>
        <dbReference type="Rhea" id="RHEA:77711"/>
        <dbReference type="Rhea" id="RHEA-COMP:18975"/>
        <dbReference type="Rhea" id="RHEA-COMP:18976"/>
        <dbReference type="ChEBI" id="CHEBI:15377"/>
        <dbReference type="ChEBI" id="CHEBI:15378"/>
        <dbReference type="ChEBI" id="CHEBI:16301"/>
        <dbReference type="ChEBI" id="CHEBI:16480"/>
        <dbReference type="ChEBI" id="CHEBI:55376"/>
        <dbReference type="ChEBI" id="CHEBI:60344"/>
    </reaction>
    <physiologicalReaction direction="right-to-left" evidence="2">
        <dbReference type="Rhea" id="RHEA:77713"/>
    </physiologicalReaction>
</comment>
<comment type="catalytic activity">
    <reaction evidence="2">
        <text>H2O2 + AH2 = A + 2 H2O</text>
        <dbReference type="Rhea" id="RHEA:30275"/>
        <dbReference type="ChEBI" id="CHEBI:13193"/>
        <dbReference type="ChEBI" id="CHEBI:15377"/>
        <dbReference type="ChEBI" id="CHEBI:16240"/>
        <dbReference type="ChEBI" id="CHEBI:17499"/>
    </reaction>
</comment>
<comment type="subunit">
    <text evidence="3">Monomeric.</text>
</comment>
<comment type="subcellular location">
    <subcellularLocation>
        <location evidence="2">Cytoplasm</location>
        <location evidence="2">Sarcoplasm</location>
    </subcellularLocation>
</comment>
<comment type="similarity">
    <text evidence="6">Belongs to the globin family.</text>
</comment>
<sequence>MADFEMVLKHWGPVEADYATHGNLVLTRLFTEHPETQKLFPKFAGIAKADMAGNAAISAHGATVLKKLGELLKAKGSHAAIIKPMANSHATKHKIPIKNFELISEVIGKVMHEKAGLDAAGQKALKNVMTTIIADIEANYKELGFTG</sequence>
<gene>
    <name type="primary">mb</name>
</gene>
<protein>
    <recommendedName>
        <fullName>Myoglobin</fullName>
    </recommendedName>
    <alternativeName>
        <fullName evidence="2">Nitrite reductase MB</fullName>
        <ecNumber evidence="2">1.7.-.-</ecNumber>
    </alternativeName>
    <alternativeName>
        <fullName evidence="2">Pseudoperoxidase MB</fullName>
        <ecNumber evidence="2">1.11.1.-</ecNumber>
    </alternativeName>
</protein>
<organism>
    <name type="scientific">Makaira nigricans</name>
    <name type="common">Atlantic blue marlin</name>
    <dbReference type="NCBI Taxonomy" id="13604"/>
    <lineage>
        <taxon>Eukaryota</taxon>
        <taxon>Metazoa</taxon>
        <taxon>Chordata</taxon>
        <taxon>Craniata</taxon>
        <taxon>Vertebrata</taxon>
        <taxon>Euteleostomi</taxon>
        <taxon>Actinopterygii</taxon>
        <taxon>Neopterygii</taxon>
        <taxon>Teleostei</taxon>
        <taxon>Neoteleostei</taxon>
        <taxon>Acanthomorphata</taxon>
        <taxon>Carangaria</taxon>
        <taxon>Istiophoriformes</taxon>
        <taxon>Makaira</taxon>
    </lineage>
</organism>
<proteinExistence type="evidence at transcript level"/>
<accession>Q9DGJ1</accession>
<name>MYG_MAKNI</name>
<keyword id="KW-0963">Cytoplasm</keyword>
<keyword id="KW-0349">Heme</keyword>
<keyword id="KW-0408">Iron</keyword>
<keyword id="KW-0479">Metal-binding</keyword>
<keyword id="KW-0514">Muscle protein</keyword>
<keyword id="KW-0560">Oxidoreductase</keyword>
<keyword id="KW-0561">Oxygen transport</keyword>
<keyword id="KW-0813">Transport</keyword>
<evidence type="ECO:0000250" key="1"/>
<evidence type="ECO:0000250" key="2">
    <source>
        <dbReference type="UniProtKB" id="P02144"/>
    </source>
</evidence>
<evidence type="ECO:0000250" key="3">
    <source>
        <dbReference type="UniProtKB" id="P02185"/>
    </source>
</evidence>
<evidence type="ECO:0000250" key="4">
    <source>
        <dbReference type="UniProtKB" id="P02189"/>
    </source>
</evidence>
<evidence type="ECO:0000250" key="5">
    <source>
        <dbReference type="UniProtKB" id="P68082"/>
    </source>
</evidence>
<evidence type="ECO:0000255" key="6">
    <source>
        <dbReference type="PROSITE-ProRule" id="PRU00238"/>
    </source>
</evidence>